<keyword id="KW-0012">Acyltransferase</keyword>
<keyword id="KW-0963">Cytoplasm</keyword>
<keyword id="KW-0536">Nodulation</keyword>
<keyword id="KW-1185">Reference proteome</keyword>
<keyword id="KW-0808">Transferase</keyword>
<dbReference type="EC" id="2.3.1.-"/>
<dbReference type="EMBL" id="L18897">
    <property type="protein sequence ID" value="AAB51162.1"/>
    <property type="molecule type" value="Genomic_DNA"/>
</dbReference>
<dbReference type="EMBL" id="AP009384">
    <property type="protein sequence ID" value="BAF89816.1"/>
    <property type="molecule type" value="Genomic_DNA"/>
</dbReference>
<dbReference type="PIR" id="JQ0393">
    <property type="entry name" value="JQ0393"/>
</dbReference>
<dbReference type="RefSeq" id="WP_012172341.1">
    <property type="nucleotide sequence ID" value="NC_009937.1"/>
</dbReference>
<dbReference type="SMR" id="Q07739"/>
<dbReference type="STRING" id="438753.AZC_3818"/>
<dbReference type="KEGG" id="azc:AZC_3818"/>
<dbReference type="eggNOG" id="COG3153">
    <property type="taxonomic scope" value="Bacteria"/>
</dbReference>
<dbReference type="HOGENOM" id="CLU_098284_0_0_5"/>
<dbReference type="Proteomes" id="UP000000270">
    <property type="component" value="Chromosome"/>
</dbReference>
<dbReference type="GO" id="GO:0005829">
    <property type="term" value="C:cytosol"/>
    <property type="evidence" value="ECO:0007669"/>
    <property type="project" value="InterPro"/>
</dbReference>
<dbReference type="GO" id="GO:0016746">
    <property type="term" value="F:acyltransferase activity"/>
    <property type="evidence" value="ECO:0007669"/>
    <property type="project" value="UniProtKB-UniRule"/>
</dbReference>
<dbReference type="Gene3D" id="3.40.630.30">
    <property type="match status" value="1"/>
</dbReference>
<dbReference type="HAMAP" id="MF_00084">
    <property type="entry name" value="NodA"/>
    <property type="match status" value="1"/>
</dbReference>
<dbReference type="InterPro" id="IPR003484">
    <property type="entry name" value="NodA"/>
</dbReference>
<dbReference type="InterPro" id="IPR020567">
    <property type="entry name" value="Nodulation_prot_NodA_CS"/>
</dbReference>
<dbReference type="NCBIfam" id="TIGR04245">
    <property type="entry name" value="nodulat_NodA"/>
    <property type="match status" value="1"/>
</dbReference>
<dbReference type="NCBIfam" id="NF001974">
    <property type="entry name" value="PRK00756.1"/>
    <property type="match status" value="1"/>
</dbReference>
<dbReference type="Pfam" id="PF02474">
    <property type="entry name" value="NodA"/>
    <property type="match status" value="1"/>
</dbReference>
<dbReference type="PROSITE" id="PS01349">
    <property type="entry name" value="NODA"/>
    <property type="match status" value="1"/>
</dbReference>
<comment type="function">
    <text>N-acyltransferase required for nodulation. Acts in the production of a small, heat-stable compound (Nod) that stimulates mitosis in various plant protoplasts.</text>
</comment>
<comment type="subcellular location">
    <subcellularLocation>
        <location evidence="1">Cytoplasm</location>
    </subcellularLocation>
</comment>
<comment type="similarity">
    <text evidence="2">Belongs to the NodA family.</text>
</comment>
<name>NODA_AZOC5</name>
<protein>
    <recommendedName>
        <fullName>Nodulation protein A</fullName>
        <ecNumber>2.3.1.-</ecNumber>
    </recommendedName>
</protein>
<evidence type="ECO:0000250" key="1"/>
<evidence type="ECO:0000305" key="2"/>
<gene>
    <name type="primary">nodA</name>
    <name type="ordered locus">AZC_3818</name>
</gene>
<sequence>MMVHNYCAPENVTAPPHVSRVTQYNKRGIRMISKVTWRVAWESDLTNGDHAELSDFFKSVYGATGAFNALPFAGGRSWAGARPELRGIAYDESGVAAHMGVLRRFIKVGGEQIAVAELGLYGVRRDLEGLGIGHSTLAMLPVLKALGVPFAFGCFRNELRIHFQRFCRNGKGAIVDNVNIKSTQPDIYPDLPPTKIEKKAAVILPLTETLDRWPEGVDIERNGPEL</sequence>
<accession>Q07739</accession>
<accession>A8IP13</accession>
<organism>
    <name type="scientific">Azorhizobium caulinodans (strain ATCC 43989 / DSM 5975 / JCM 20966 / LMG 6465 / NBRC 14845 / NCIMB 13405 / ORS 571)</name>
    <dbReference type="NCBI Taxonomy" id="438753"/>
    <lineage>
        <taxon>Bacteria</taxon>
        <taxon>Pseudomonadati</taxon>
        <taxon>Pseudomonadota</taxon>
        <taxon>Alphaproteobacteria</taxon>
        <taxon>Hyphomicrobiales</taxon>
        <taxon>Xanthobacteraceae</taxon>
        <taxon>Azorhizobium</taxon>
    </lineage>
</organism>
<reference key="1">
    <citation type="journal article" date="1989" name="Mol. Gen. Genet.">
        <title>Common nodABC genes in Nod locus 1 of Azorhizobium caulinodans: nucleotide sequence and plant-inducible expression.</title>
        <authorList>
            <person name="Goethals K."/>
            <person name="Gao M."/>
            <person name="Tomekpe K."/>
            <person name="van Montagu M."/>
            <person name="Holsters M."/>
        </authorList>
    </citation>
    <scope>NUCLEOTIDE SEQUENCE [GENOMIC DNA]</scope>
</reference>
<reference key="2">
    <citation type="submission" date="2007-04" db="EMBL/GenBank/DDBJ databases">
        <title>Complete genome sequence of the nitrogen-fixing bacterium Azorhizobium caulinodans ORS571.</title>
        <authorList>
            <person name="Lee K.B."/>
            <person name="Backer P.D."/>
            <person name="Aono T."/>
            <person name="Liu C.T."/>
            <person name="Suzuki S."/>
            <person name="Suzuki T."/>
            <person name="Kaneko T."/>
            <person name="Yamada M."/>
            <person name="Tabata S."/>
            <person name="Kupfer D.M."/>
            <person name="Najar F.Z."/>
            <person name="Wiley G.B."/>
            <person name="Roe B."/>
            <person name="Binnewies T."/>
            <person name="Ussery D."/>
            <person name="Vereecke D."/>
            <person name="Gevers D."/>
            <person name="Holsters M."/>
            <person name="Oyaizu H."/>
        </authorList>
    </citation>
    <scope>NUCLEOTIDE SEQUENCE [LARGE SCALE GENOMIC DNA]</scope>
    <source>
        <strain>ATCC 43989 / DSM 5975 / JCM 20966 / LMG 6465 / NBRC 14845 / NCIMB 13405 / ORS 571</strain>
    </source>
</reference>
<proteinExistence type="inferred from homology"/>
<feature type="chain" id="PRO_0000196329" description="Nodulation protein A">
    <location>
        <begin position="1"/>
        <end position="226"/>
    </location>
</feature>